<proteinExistence type="inferred from homology"/>
<reference key="1">
    <citation type="journal article" date="2005" name="Jpn. Agric. Res. Q.">
        <title>Genome sequence of Xanthomonas oryzae pv. oryzae suggests contribution of large numbers of effector genes and insertion sequences to its race diversity.</title>
        <authorList>
            <person name="Ochiai H."/>
            <person name="Inoue Y."/>
            <person name="Takeya M."/>
            <person name="Sasaki A."/>
            <person name="Kaku H."/>
        </authorList>
    </citation>
    <scope>NUCLEOTIDE SEQUENCE [LARGE SCALE GENOMIC DNA]</scope>
    <source>
        <strain>MAFF 311018</strain>
    </source>
</reference>
<keyword id="KW-0028">Amino-acid biosynthesis</keyword>
<keyword id="KW-0055">Arginine biosynthesis</keyword>
<keyword id="KW-0963">Cytoplasm</keyword>
<keyword id="KW-0521">NADP</keyword>
<keyword id="KW-0560">Oxidoreductase</keyword>
<evidence type="ECO:0000255" key="1">
    <source>
        <dbReference type="HAMAP-Rule" id="MF_00150"/>
    </source>
</evidence>
<comment type="function">
    <text evidence="1">Catalyzes the NADPH-dependent reduction of N-acetyl-5-glutamyl phosphate to yield N-acetyl-L-glutamate 5-semialdehyde.</text>
</comment>
<comment type="catalytic activity">
    <reaction evidence="1">
        <text>N-acetyl-L-glutamate 5-semialdehyde + phosphate + NADP(+) = N-acetyl-L-glutamyl 5-phosphate + NADPH + H(+)</text>
        <dbReference type="Rhea" id="RHEA:21588"/>
        <dbReference type="ChEBI" id="CHEBI:15378"/>
        <dbReference type="ChEBI" id="CHEBI:29123"/>
        <dbReference type="ChEBI" id="CHEBI:43474"/>
        <dbReference type="ChEBI" id="CHEBI:57783"/>
        <dbReference type="ChEBI" id="CHEBI:57936"/>
        <dbReference type="ChEBI" id="CHEBI:58349"/>
        <dbReference type="EC" id="1.2.1.38"/>
    </reaction>
</comment>
<comment type="pathway">
    <text evidence="1">Amino-acid biosynthesis; L-arginine biosynthesis; N(2)-acetyl-L-ornithine from L-glutamate: step 3/4.</text>
</comment>
<comment type="subcellular location">
    <subcellularLocation>
        <location evidence="1">Cytoplasm</location>
    </subcellularLocation>
</comment>
<comment type="similarity">
    <text evidence="1">Belongs to the NAGSA dehydrogenase family. Type 1 subfamily.</text>
</comment>
<protein>
    <recommendedName>
        <fullName evidence="1">N-acetyl-gamma-glutamyl-phosphate reductase</fullName>
        <shortName evidence="1">AGPR</shortName>
        <ecNumber evidence="1">1.2.1.38</ecNumber>
    </recommendedName>
    <alternativeName>
        <fullName evidence="1">N-acetyl-glutamate semialdehyde dehydrogenase</fullName>
        <shortName evidence="1">NAGSA dehydrogenase</shortName>
    </alternativeName>
</protein>
<organism>
    <name type="scientific">Xanthomonas oryzae pv. oryzae (strain MAFF 311018)</name>
    <dbReference type="NCBI Taxonomy" id="342109"/>
    <lineage>
        <taxon>Bacteria</taxon>
        <taxon>Pseudomonadati</taxon>
        <taxon>Pseudomonadota</taxon>
        <taxon>Gammaproteobacteria</taxon>
        <taxon>Lysobacterales</taxon>
        <taxon>Lysobacteraceae</taxon>
        <taxon>Xanthomonas</taxon>
    </lineage>
</organism>
<gene>
    <name evidence="1" type="primary">argC</name>
    <name type="ordered locus">XOO2516</name>
</gene>
<dbReference type="EC" id="1.2.1.38" evidence="1"/>
<dbReference type="EMBL" id="AP008229">
    <property type="protein sequence ID" value="BAE69271.1"/>
    <property type="molecule type" value="Genomic_DNA"/>
</dbReference>
<dbReference type="RefSeq" id="WP_011408718.1">
    <property type="nucleotide sequence ID" value="NC_007705.1"/>
</dbReference>
<dbReference type="SMR" id="Q2P2F6"/>
<dbReference type="KEGG" id="xom:XOO2516"/>
<dbReference type="HOGENOM" id="CLU_006384_3_0_6"/>
<dbReference type="UniPathway" id="UPA00068">
    <property type="reaction ID" value="UER00108"/>
</dbReference>
<dbReference type="GO" id="GO:0005737">
    <property type="term" value="C:cytoplasm"/>
    <property type="evidence" value="ECO:0007669"/>
    <property type="project" value="UniProtKB-SubCell"/>
</dbReference>
<dbReference type="GO" id="GO:0003942">
    <property type="term" value="F:N-acetyl-gamma-glutamyl-phosphate reductase activity"/>
    <property type="evidence" value="ECO:0007669"/>
    <property type="project" value="UniProtKB-UniRule"/>
</dbReference>
<dbReference type="GO" id="GO:0051287">
    <property type="term" value="F:NAD binding"/>
    <property type="evidence" value="ECO:0007669"/>
    <property type="project" value="InterPro"/>
</dbReference>
<dbReference type="GO" id="GO:0070401">
    <property type="term" value="F:NADP+ binding"/>
    <property type="evidence" value="ECO:0007669"/>
    <property type="project" value="InterPro"/>
</dbReference>
<dbReference type="GO" id="GO:0006526">
    <property type="term" value="P:L-arginine biosynthetic process"/>
    <property type="evidence" value="ECO:0007669"/>
    <property type="project" value="UniProtKB-UniRule"/>
</dbReference>
<dbReference type="CDD" id="cd23936">
    <property type="entry name" value="AGPR_C_ARG5_6_like"/>
    <property type="match status" value="1"/>
</dbReference>
<dbReference type="CDD" id="cd24149">
    <property type="entry name" value="AGPR_N_ARG5_6_like"/>
    <property type="match status" value="1"/>
</dbReference>
<dbReference type="Gene3D" id="3.30.360.10">
    <property type="entry name" value="Dihydrodipicolinate Reductase, domain 2"/>
    <property type="match status" value="1"/>
</dbReference>
<dbReference type="Gene3D" id="3.40.50.720">
    <property type="entry name" value="NAD(P)-binding Rossmann-like Domain"/>
    <property type="match status" value="1"/>
</dbReference>
<dbReference type="HAMAP" id="MF_00150">
    <property type="entry name" value="ArgC_type1"/>
    <property type="match status" value="1"/>
</dbReference>
<dbReference type="InterPro" id="IPR023013">
    <property type="entry name" value="AGPR_AS"/>
</dbReference>
<dbReference type="InterPro" id="IPR000706">
    <property type="entry name" value="AGPR_type-1"/>
</dbReference>
<dbReference type="InterPro" id="IPR036291">
    <property type="entry name" value="NAD(P)-bd_dom_sf"/>
</dbReference>
<dbReference type="InterPro" id="IPR050085">
    <property type="entry name" value="NAGSA_dehydrogenase"/>
</dbReference>
<dbReference type="InterPro" id="IPR000534">
    <property type="entry name" value="Semialdehyde_DH_NAD-bd"/>
</dbReference>
<dbReference type="NCBIfam" id="TIGR01850">
    <property type="entry name" value="argC"/>
    <property type="match status" value="1"/>
</dbReference>
<dbReference type="PANTHER" id="PTHR32338:SF10">
    <property type="entry name" value="N-ACETYL-GAMMA-GLUTAMYL-PHOSPHATE REDUCTASE, CHLOROPLASTIC-RELATED"/>
    <property type="match status" value="1"/>
</dbReference>
<dbReference type="PANTHER" id="PTHR32338">
    <property type="entry name" value="N-ACETYL-GAMMA-GLUTAMYL-PHOSPHATE REDUCTASE, CHLOROPLASTIC-RELATED-RELATED"/>
    <property type="match status" value="1"/>
</dbReference>
<dbReference type="Pfam" id="PF01118">
    <property type="entry name" value="Semialdhyde_dh"/>
    <property type="match status" value="1"/>
</dbReference>
<dbReference type="Pfam" id="PF22698">
    <property type="entry name" value="Semialdhyde_dhC_1"/>
    <property type="match status" value="1"/>
</dbReference>
<dbReference type="SMART" id="SM00859">
    <property type="entry name" value="Semialdhyde_dh"/>
    <property type="match status" value="1"/>
</dbReference>
<dbReference type="SUPFAM" id="SSF55347">
    <property type="entry name" value="Glyceraldehyde-3-phosphate dehydrogenase-like, C-terminal domain"/>
    <property type="match status" value="1"/>
</dbReference>
<dbReference type="SUPFAM" id="SSF51735">
    <property type="entry name" value="NAD(P)-binding Rossmann-fold domains"/>
    <property type="match status" value="1"/>
</dbReference>
<dbReference type="PROSITE" id="PS01224">
    <property type="entry name" value="ARGC"/>
    <property type="match status" value="1"/>
</dbReference>
<feature type="chain" id="PRO_1000096749" description="N-acetyl-gamma-glutamyl-phosphate reductase">
    <location>
        <begin position="1"/>
        <end position="316"/>
    </location>
</feature>
<feature type="active site" evidence="1">
    <location>
        <position position="136"/>
    </location>
</feature>
<accession>Q2P2F6</accession>
<name>ARGC_XANOM</name>
<sequence length="316" mass="33947">MTVQTTTIGIVGARGHTGSELIKLVAAHPHLQLVFVSSRELAGQRVAEHNQAYQAELRYESLDANAVAAKAADVVILALPNGNAAPFVAAIDAATPQTLVIDLSTDYRFDPAWYYGLPELTRGSYAGQKRISNPGCYATAMQLTIAPLLDQLAGPPQCFGVSGYSGAGTTPSDKNNPALLADNLMPYALTNHMHEREVSAQLGVPVEFMPHVAPHFRGITLTVNLWLQQPLTREQIQARYTQRYADEPLIEIVDEAPWVSRIAGRHGVQIGGVTLAPGNKRVVVVATLDNLLKGAATQAMQNLNLALGWDELTAIG</sequence>